<feature type="chain" id="PRO_0000378990" description="Ubiquitin carboxyl-terminal hydrolase 12">
    <location>
        <begin position="1"/>
        <end position="369"/>
    </location>
</feature>
<feature type="domain" description="USP" evidence="4">
    <location>
        <begin position="39"/>
        <end position="368"/>
    </location>
</feature>
<feature type="region of interest" description="Disordered" evidence="5">
    <location>
        <begin position="145"/>
        <end position="165"/>
    </location>
</feature>
<feature type="short sequence motif" description="Required for plasma membrane localization of USP12/WDR20" evidence="2">
    <location>
        <begin position="1"/>
        <end position="4"/>
    </location>
</feature>
<feature type="active site" description="Nucleophile" evidence="4">
    <location>
        <position position="48"/>
    </location>
</feature>
<feature type="active site" description="Proton acceptor" evidence="4">
    <location>
        <position position="316"/>
    </location>
</feature>
<feature type="binding site" evidence="2">
    <location>
        <position position="185"/>
    </location>
    <ligand>
        <name>Zn(2+)</name>
        <dbReference type="ChEBI" id="CHEBI:29105"/>
    </ligand>
</feature>
<feature type="binding site" evidence="2">
    <location>
        <position position="188"/>
    </location>
    <ligand>
        <name>Zn(2+)</name>
        <dbReference type="ChEBI" id="CHEBI:29105"/>
    </ligand>
</feature>
<feature type="binding site" evidence="2">
    <location>
        <position position="232"/>
    </location>
    <ligand>
        <name>Zn(2+)</name>
        <dbReference type="ChEBI" id="CHEBI:29105"/>
    </ligand>
</feature>
<feature type="binding site" evidence="2">
    <location>
        <position position="235"/>
    </location>
    <ligand>
        <name>Zn(2+)</name>
        <dbReference type="ChEBI" id="CHEBI:29105"/>
    </ligand>
</feature>
<name>UBP12_BOVIN</name>
<gene>
    <name type="primary">USP12</name>
</gene>
<comment type="function">
    <text evidence="1 2 3">Deubiquitinating enzyme that plays various roles in the regulation of the immune response and inflammation. During TCR engagement and activation, translocates into the cytoplasm and deubiquitinates its substrates LAT and TRAT1 and prevents their lysosome-dependent degradation to stabilize the TCR signaling complex at the plasma membrane. Plays an essential role in the selective LPS-induced macrophage response through the activation of NF-kappa-B pathway. In addition, promotes that antiviral immune response through targeting DNA sensor IFI16 to inhibit its proteasome-dependent degradation. Participates in the interferon signaling pathway and antiviral response independently of its deubiquitinase activity by maintaining nuclear phosphorylated STAT1 levels via inhibition of its CREBBP-mediated acetylation and subsequent dephosphorylation (By similarity). Plays an intrinsic role in promoting the differentiation, activation and proliferation of CD4(+) T-cell by activating the NF-kappa-B signaling pathway through deubiquitinating and stabilizing B-cell lymphoma/leukemia 10/BCL10 (By similarity). In myeloid-derived suppressor cells promotes the activation of the NF-kappa-B via deubiquitination and stabilization of RELA (By similarity). Regulates the 'Lys-63'-linked polyubiquitin chains of BAX and thereby modulates the mitochondrial apoptotic process (By similarity). Negative regulator of NOTCH signaling that specifically deubiquitinates non-activated NOTCH receptors to target them for lysosomal degradation; deubiquitination of NOTCH stimulates its transport form late endosomes to lysosomes (By similarity). Protects neurons against HTT/huntingtin-induced polyglutamine expansion-dependent neurodegeneration through regulation of autophagic flux (By similarity). This function is independent of deubiquitinase activity or of other components of the USP12-WDR20-WDR48 deubiquitinating complex (By similarity). In complex with WDR48, acts as a potential tumor suppressor by positively regulating PHLPP1 stability (By similarity).</text>
</comment>
<comment type="catalytic activity">
    <reaction evidence="2">
        <text>Thiol-dependent hydrolysis of ester, thioester, amide, peptide and isopeptide bonds formed by the C-terminal Gly of ubiquitin (a 76-residue protein attached to proteins as an intracellular targeting signal).</text>
        <dbReference type="EC" id="3.4.19.12"/>
    </reaction>
</comment>
<comment type="activity regulation">
    <text evidence="2">Activated by interaction with WDR20, WDR48 and DMWD through different allosteric mechanisms.</text>
</comment>
<comment type="subunit">
    <text evidence="2">Interacts with WDR48. Interacts with WDR20; this interaction promotes translocation of the USP12 complex to the plasma membrane. Component of the USP12/WDR20/WDR48 deubiquitinating complex. Component of the USP12/WDR20/WDR48 deubiquitinating complex. Interacts with PHLPP1. Interacts with RBPJ. Interacts with CBP; this interaction blocks the acetyltransferase activity of CREBBP.</text>
</comment>
<comment type="subcellular location">
    <subcellularLocation>
        <location evidence="2">Nucleus</location>
    </subcellularLocation>
    <subcellularLocation>
        <location evidence="2">Cytoplasm</location>
    </subcellularLocation>
    <subcellularLocation>
        <location evidence="2">Cell membrane</location>
    </subcellularLocation>
    <text evidence="2">Translocates from the nucleus to the cytosol on TCR stimulation, while it translocates into the nucleus in IFN signaling. USP12/WDR20/WDR48 complex is localized mainly to the plasma membrane.</text>
</comment>
<comment type="similarity">
    <text evidence="6">Belongs to the peptidase C19 family. USP12/USP46 subfamily.</text>
</comment>
<evidence type="ECO:0000250" key="1">
    <source>
        <dbReference type="UniProtKB" id="D0RB01"/>
    </source>
</evidence>
<evidence type="ECO:0000250" key="2">
    <source>
        <dbReference type="UniProtKB" id="O75317"/>
    </source>
</evidence>
<evidence type="ECO:0000250" key="3">
    <source>
        <dbReference type="UniProtKB" id="Q9D9M2"/>
    </source>
</evidence>
<evidence type="ECO:0000255" key="4">
    <source>
        <dbReference type="PROSITE-ProRule" id="PRU01035"/>
    </source>
</evidence>
<evidence type="ECO:0000256" key="5">
    <source>
        <dbReference type="SAM" id="MobiDB-lite"/>
    </source>
</evidence>
<evidence type="ECO:0000305" key="6"/>
<evidence type="ECO:0000312" key="7">
    <source>
        <dbReference type="Proteomes" id="UP000009136"/>
    </source>
</evidence>
<keyword id="KW-1003">Cell membrane</keyword>
<keyword id="KW-0963">Cytoplasm</keyword>
<keyword id="KW-0378">Hydrolase</keyword>
<keyword id="KW-0472">Membrane</keyword>
<keyword id="KW-0479">Metal-binding</keyword>
<keyword id="KW-0539">Nucleus</keyword>
<keyword id="KW-0645">Protease</keyword>
<keyword id="KW-1185">Reference proteome</keyword>
<keyword id="KW-0788">Thiol protease</keyword>
<keyword id="KW-0833">Ubl conjugation pathway</keyword>
<keyword id="KW-0862">Zinc</keyword>
<protein>
    <recommendedName>
        <fullName evidence="6">Ubiquitin carboxyl-terminal hydrolase 12</fullName>
        <ecNumber evidence="2">3.4.19.12</ecNumber>
    </recommendedName>
    <alternativeName>
        <fullName>Deubiquitinating enzyme 12</fullName>
    </alternativeName>
    <alternativeName>
        <fullName evidence="2">Ubiquitin specific peptidase 12</fullName>
    </alternativeName>
    <alternativeName>
        <fullName>Ubiquitin thioesterase 12</fullName>
    </alternativeName>
    <alternativeName>
        <fullName>Ubiquitin-specific-processing protease 12</fullName>
    </alternativeName>
</protein>
<reference key="1">
    <citation type="journal article" date="2005" name="BMC Genomics">
        <title>Characterization of 954 bovine full-CDS cDNA sequences.</title>
        <authorList>
            <person name="Harhay G.P."/>
            <person name="Sonstegard T.S."/>
            <person name="Keele J.W."/>
            <person name="Heaton M.P."/>
            <person name="Clawson M.L."/>
            <person name="Snelling W.M."/>
            <person name="Wiedmann R.T."/>
            <person name="Van Tassell C.P."/>
            <person name="Smith T.P.L."/>
        </authorList>
    </citation>
    <scope>NUCLEOTIDE SEQUENCE [LARGE SCALE MRNA]</scope>
</reference>
<organism evidence="7">
    <name type="scientific">Bos taurus</name>
    <name type="common">Bovine</name>
    <dbReference type="NCBI Taxonomy" id="9913"/>
    <lineage>
        <taxon>Eukaryota</taxon>
        <taxon>Metazoa</taxon>
        <taxon>Chordata</taxon>
        <taxon>Craniata</taxon>
        <taxon>Vertebrata</taxon>
        <taxon>Euteleostomi</taxon>
        <taxon>Mammalia</taxon>
        <taxon>Eutheria</taxon>
        <taxon>Laurasiatheria</taxon>
        <taxon>Artiodactyla</taxon>
        <taxon>Ruminantia</taxon>
        <taxon>Pecora</taxon>
        <taxon>Bovidae</taxon>
        <taxon>Bovinae</taxon>
        <taxon>Bos</taxon>
    </lineage>
</organism>
<dbReference type="EC" id="3.4.19.12" evidence="2"/>
<dbReference type="EMBL" id="BT030596">
    <property type="protein sequence ID" value="ABQ13036.1"/>
    <property type="molecule type" value="mRNA"/>
</dbReference>
<dbReference type="RefSeq" id="NP_001091528.1">
    <property type="nucleotide sequence ID" value="NM_001098059.1"/>
</dbReference>
<dbReference type="SMR" id="A5D9H7"/>
<dbReference type="FunCoup" id="A5D9H7">
    <property type="interactions" value="3471"/>
</dbReference>
<dbReference type="STRING" id="9913.ENSBTAP00000058257"/>
<dbReference type="PaxDb" id="9913-ENSBTAP00000022828"/>
<dbReference type="Ensembl" id="ENSBTAT00000080478.2">
    <property type="protein sequence ID" value="ENSBTAP00000058257.2"/>
    <property type="gene ID" value="ENSBTAG00000017179.7"/>
</dbReference>
<dbReference type="GeneID" id="525655"/>
<dbReference type="KEGG" id="bta:525655"/>
<dbReference type="CTD" id="219333"/>
<dbReference type="VEuPathDB" id="HostDB:ENSBTAG00000017179"/>
<dbReference type="VGNC" id="VGNC:52840">
    <property type="gene designation" value="USP12"/>
</dbReference>
<dbReference type="eggNOG" id="KOG1864">
    <property type="taxonomic scope" value="Eukaryota"/>
</dbReference>
<dbReference type="GeneTree" id="ENSGT00940000153284"/>
<dbReference type="HOGENOM" id="CLU_008279_2_0_1"/>
<dbReference type="InParanoid" id="A5D9H7"/>
<dbReference type="OMA" id="KSHNFWL"/>
<dbReference type="OrthoDB" id="27652at2759"/>
<dbReference type="TreeFam" id="TF314144"/>
<dbReference type="Reactome" id="R-BTA-5689880">
    <property type="pathway name" value="Ub-specific processing proteases"/>
</dbReference>
<dbReference type="Proteomes" id="UP000009136">
    <property type="component" value="Chromosome 12"/>
</dbReference>
<dbReference type="Bgee" id="ENSBTAG00000017179">
    <property type="expression patterns" value="Expressed in spermatocyte and 105 other cell types or tissues"/>
</dbReference>
<dbReference type="GO" id="GO:0005737">
    <property type="term" value="C:cytoplasm"/>
    <property type="evidence" value="ECO:0000250"/>
    <property type="project" value="UniProtKB"/>
</dbReference>
<dbReference type="GO" id="GO:0005829">
    <property type="term" value="C:cytosol"/>
    <property type="evidence" value="ECO:0000318"/>
    <property type="project" value="GO_Central"/>
</dbReference>
<dbReference type="GO" id="GO:0005634">
    <property type="term" value="C:nucleus"/>
    <property type="evidence" value="ECO:0000250"/>
    <property type="project" value="UniProtKB"/>
</dbReference>
<dbReference type="GO" id="GO:0005886">
    <property type="term" value="C:plasma membrane"/>
    <property type="evidence" value="ECO:0000250"/>
    <property type="project" value="UniProtKB"/>
</dbReference>
<dbReference type="GO" id="GO:0004843">
    <property type="term" value="F:cysteine-type deubiquitinase activity"/>
    <property type="evidence" value="ECO:0000250"/>
    <property type="project" value="UniProtKB"/>
</dbReference>
<dbReference type="GO" id="GO:0004197">
    <property type="term" value="F:cysteine-type endopeptidase activity"/>
    <property type="evidence" value="ECO:0000250"/>
    <property type="project" value="UniProtKB"/>
</dbReference>
<dbReference type="GO" id="GO:0046872">
    <property type="term" value="F:metal ion binding"/>
    <property type="evidence" value="ECO:0007669"/>
    <property type="project" value="UniProtKB-KW"/>
</dbReference>
<dbReference type="GO" id="GO:0016579">
    <property type="term" value="P:protein deubiquitination"/>
    <property type="evidence" value="ECO:0000250"/>
    <property type="project" value="UniProtKB"/>
</dbReference>
<dbReference type="GO" id="GO:0006508">
    <property type="term" value="P:proteolysis"/>
    <property type="evidence" value="ECO:0007669"/>
    <property type="project" value="UniProtKB-KW"/>
</dbReference>
<dbReference type="GO" id="GO:0031647">
    <property type="term" value="P:regulation of protein stability"/>
    <property type="evidence" value="ECO:0000318"/>
    <property type="project" value="GO_Central"/>
</dbReference>
<dbReference type="CDD" id="cd02663">
    <property type="entry name" value="Peptidase_C19G"/>
    <property type="match status" value="1"/>
</dbReference>
<dbReference type="FunFam" id="3.90.70.10:FF:000003">
    <property type="entry name" value="Ubiquitin carboxyl-terminal hydrolase 46"/>
    <property type="match status" value="1"/>
</dbReference>
<dbReference type="Gene3D" id="3.90.70.10">
    <property type="entry name" value="Cysteine proteinases"/>
    <property type="match status" value="1"/>
</dbReference>
<dbReference type="InterPro" id="IPR038765">
    <property type="entry name" value="Papain-like_cys_pep_sf"/>
</dbReference>
<dbReference type="InterPro" id="IPR050164">
    <property type="entry name" value="Peptidase_C19"/>
</dbReference>
<dbReference type="InterPro" id="IPR001394">
    <property type="entry name" value="Peptidase_C19_UCH"/>
</dbReference>
<dbReference type="InterPro" id="IPR018200">
    <property type="entry name" value="USP_CS"/>
</dbReference>
<dbReference type="InterPro" id="IPR028889">
    <property type="entry name" value="USP_dom"/>
</dbReference>
<dbReference type="PANTHER" id="PTHR24006">
    <property type="entry name" value="UBIQUITIN CARBOXYL-TERMINAL HYDROLASE"/>
    <property type="match status" value="1"/>
</dbReference>
<dbReference type="PANTHER" id="PTHR24006:SF647">
    <property type="entry name" value="UBIQUITIN CARBOXYL-TERMINAL HYDROLASE 12"/>
    <property type="match status" value="1"/>
</dbReference>
<dbReference type="Pfam" id="PF00443">
    <property type="entry name" value="UCH"/>
    <property type="match status" value="1"/>
</dbReference>
<dbReference type="SUPFAM" id="SSF54001">
    <property type="entry name" value="Cysteine proteinases"/>
    <property type="match status" value="1"/>
</dbReference>
<dbReference type="PROSITE" id="PS00972">
    <property type="entry name" value="USP_1"/>
    <property type="match status" value="1"/>
</dbReference>
<dbReference type="PROSITE" id="PS00973">
    <property type="entry name" value="USP_2"/>
    <property type="match status" value="1"/>
</dbReference>
<dbReference type="PROSITE" id="PS50235">
    <property type="entry name" value="USP_3"/>
    <property type="match status" value="1"/>
</dbReference>
<sequence length="369" mass="42683">MEILMTVSKLASICTMGANASALEKEIGPEQFPVNEHYFGLVNFGNTCYCNSVLQALYFCRPFREKVLAYKSQPRKKESLLTCLADLFHSIATQKKKVGVIPPKKFITRLRKENELFDNYMQQDAHEFLNYLLNTIADILQEERKQEKQNGRLPNGNIDSENNSTPDPTWVHEIFQGTLTNETRCLTCETISSKDEDFLDLSVDVEQNTSITHCLRGFSNTETLCSEYKYYCEECRSKQEAHKRMKVKKLPMILALHLKRFKYMDQLHRYTKLSYRVVFPLELRLFNTSGDATNPDRMYDLVAVVVHCGSGPNRGHYIAIVKSHDFWLLFDDDIVEKIDAQAIEEFYGLTSDISKNSESGYILFYQSRD</sequence>
<accession>A5D9H7</accession>
<proteinExistence type="evidence at transcript level"/>